<dbReference type="EMBL" id="AF173866">
    <property type="protein sequence ID" value="AAF35831.1"/>
    <property type="molecule type" value="mRNA"/>
</dbReference>
<dbReference type="EMBL" id="AK005732">
    <property type="protein sequence ID" value="BAB24211.1"/>
    <property type="molecule type" value="mRNA"/>
</dbReference>
<dbReference type="EMBL" id="AF486266">
    <property type="protein sequence ID" value="AAM64149.1"/>
    <property type="molecule type" value="Genomic_DNA"/>
</dbReference>
<dbReference type="CCDS" id="CCDS27988.1"/>
<dbReference type="RefSeq" id="NP_056588.1">
    <property type="nucleotide sequence ID" value="NM_015773.2"/>
</dbReference>
<dbReference type="SMR" id="Q9JLI7"/>
<dbReference type="BioGRID" id="206052">
    <property type="interactions" value="195"/>
</dbReference>
<dbReference type="FunCoup" id="Q9JLI7">
    <property type="interactions" value="101"/>
</dbReference>
<dbReference type="IntAct" id="Q9JLI7">
    <property type="interactions" value="1"/>
</dbReference>
<dbReference type="STRING" id="10090.ENSMUSP00000023468"/>
<dbReference type="PhosphoSitePlus" id="Q9JLI7"/>
<dbReference type="SwissPalm" id="Q9JLI7"/>
<dbReference type="PaxDb" id="10090-ENSMUSP00000023468"/>
<dbReference type="ProteomicsDB" id="261490"/>
<dbReference type="Ensembl" id="ENSMUST00000023468.6">
    <property type="protein sequence ID" value="ENSMUSP00000023468.6"/>
    <property type="gene ID" value="ENSMUSG00000022783.12"/>
</dbReference>
<dbReference type="GeneID" id="50525"/>
<dbReference type="KEGG" id="mmu:50525"/>
<dbReference type="UCSC" id="uc007yjb.2">
    <property type="organism name" value="mouse"/>
</dbReference>
<dbReference type="AGR" id="MGI:1354388"/>
<dbReference type="CTD" id="50525"/>
<dbReference type="MGI" id="MGI:1354388">
    <property type="gene designation" value="Spag6"/>
</dbReference>
<dbReference type="VEuPathDB" id="HostDB:ENSMUSG00000022783"/>
<dbReference type="eggNOG" id="KOG0166">
    <property type="taxonomic scope" value="Eukaryota"/>
</dbReference>
<dbReference type="GeneTree" id="ENSGT00900000141099"/>
<dbReference type="HOGENOM" id="CLU_022627_1_0_1"/>
<dbReference type="InParanoid" id="Q9JLI7"/>
<dbReference type="OMA" id="CECIEQS"/>
<dbReference type="OrthoDB" id="7537227at2759"/>
<dbReference type="PhylomeDB" id="Q9JLI7"/>
<dbReference type="TreeFam" id="TF328894"/>
<dbReference type="BioGRID-ORCS" id="50525">
    <property type="hits" value="0 hits in 17 CRISPR screens"/>
</dbReference>
<dbReference type="ChiTaRS" id="Spag6">
    <property type="organism name" value="mouse"/>
</dbReference>
<dbReference type="PRO" id="PR:Q9JLI7"/>
<dbReference type="Proteomes" id="UP000000589">
    <property type="component" value="Chromosome 16"/>
</dbReference>
<dbReference type="RNAct" id="Q9JLI7">
    <property type="molecule type" value="protein"/>
</dbReference>
<dbReference type="Bgee" id="ENSMUSG00000022783">
    <property type="expression patterns" value="Expressed in spermatocyte and 64 other cell types or tissues"/>
</dbReference>
<dbReference type="ExpressionAtlas" id="Q9JLI7">
    <property type="expression patterns" value="baseline and differential"/>
</dbReference>
<dbReference type="GO" id="GO:0001669">
    <property type="term" value="C:acrosomal vesicle"/>
    <property type="evidence" value="ECO:0000314"/>
    <property type="project" value="MGI"/>
</dbReference>
<dbReference type="GO" id="GO:1990716">
    <property type="term" value="C:axonemal central apparatus"/>
    <property type="evidence" value="ECO:0000316"/>
    <property type="project" value="MGI"/>
</dbReference>
<dbReference type="GO" id="GO:0005930">
    <property type="term" value="C:axoneme"/>
    <property type="evidence" value="ECO:0000314"/>
    <property type="project" value="UniProtKB"/>
</dbReference>
<dbReference type="GO" id="GO:0031410">
    <property type="term" value="C:cytoplasmic vesicle"/>
    <property type="evidence" value="ECO:0000314"/>
    <property type="project" value="MGI"/>
</dbReference>
<dbReference type="GO" id="GO:0005829">
    <property type="term" value="C:cytosol"/>
    <property type="evidence" value="ECO:0000314"/>
    <property type="project" value="MGI"/>
</dbReference>
<dbReference type="GO" id="GO:0005576">
    <property type="term" value="C:extracellular region"/>
    <property type="evidence" value="ECO:0007669"/>
    <property type="project" value="GOC"/>
</dbReference>
<dbReference type="GO" id="GO:0120249">
    <property type="term" value="C:lateral wall of outer hair cell"/>
    <property type="evidence" value="ECO:0000314"/>
    <property type="project" value="MGI"/>
</dbReference>
<dbReference type="GO" id="GO:0002177">
    <property type="term" value="C:manchette"/>
    <property type="evidence" value="ECO:0000314"/>
    <property type="project" value="MGI"/>
</dbReference>
<dbReference type="GO" id="GO:0005874">
    <property type="term" value="C:microtubule"/>
    <property type="evidence" value="ECO:0007669"/>
    <property type="project" value="UniProtKB-KW"/>
</dbReference>
<dbReference type="GO" id="GO:0097228">
    <property type="term" value="C:sperm principal piece"/>
    <property type="evidence" value="ECO:0000314"/>
    <property type="project" value="MGI"/>
</dbReference>
<dbReference type="GO" id="GO:0008017">
    <property type="term" value="F:microtubule binding"/>
    <property type="evidence" value="ECO:0000314"/>
    <property type="project" value="MGI"/>
</dbReference>
<dbReference type="GO" id="GO:0051301">
    <property type="term" value="P:cell division"/>
    <property type="evidence" value="ECO:0000315"/>
    <property type="project" value="MGI"/>
</dbReference>
<dbReference type="GO" id="GO:0090660">
    <property type="term" value="P:cerebrospinal fluid circulation"/>
    <property type="evidence" value="ECO:0000315"/>
    <property type="project" value="MGI"/>
</dbReference>
<dbReference type="GO" id="GO:0043583">
    <property type="term" value="P:ear development"/>
    <property type="evidence" value="ECO:0000315"/>
    <property type="project" value="MGI"/>
</dbReference>
<dbReference type="GO" id="GO:0003351">
    <property type="term" value="P:epithelial cilium movement involved in extracellular fluid movement"/>
    <property type="evidence" value="ECO:0000315"/>
    <property type="project" value="MGI"/>
</dbReference>
<dbReference type="GO" id="GO:0045198">
    <property type="term" value="P:establishment of epithelial cell apical/basal polarity"/>
    <property type="evidence" value="ECO:0000315"/>
    <property type="project" value="MGI"/>
</dbReference>
<dbReference type="GO" id="GO:0051649">
    <property type="term" value="P:establishment of localization in cell"/>
    <property type="evidence" value="ECO:0000315"/>
    <property type="project" value="MGI"/>
</dbReference>
<dbReference type="GO" id="GO:0010761">
    <property type="term" value="P:fibroblast migration"/>
    <property type="evidence" value="ECO:0000315"/>
    <property type="project" value="MGI"/>
</dbReference>
<dbReference type="GO" id="GO:0046847">
    <property type="term" value="P:filopodium assembly"/>
    <property type="evidence" value="ECO:0000315"/>
    <property type="project" value="MGI"/>
</dbReference>
<dbReference type="GO" id="GO:0030317">
    <property type="term" value="P:flagellated sperm motility"/>
    <property type="evidence" value="ECO:0000315"/>
    <property type="project" value="MGI"/>
</dbReference>
<dbReference type="GO" id="GO:0044458">
    <property type="term" value="P:motile cilium assembly"/>
    <property type="evidence" value="ECO:0000315"/>
    <property type="project" value="MGI"/>
</dbReference>
<dbReference type="GO" id="GO:0120197">
    <property type="term" value="P:mucociliary clearance"/>
    <property type="evidence" value="ECO:0000316"/>
    <property type="project" value="MGI"/>
</dbReference>
<dbReference type="GO" id="GO:1990138">
    <property type="term" value="P:neuron projection extension"/>
    <property type="evidence" value="ECO:0000315"/>
    <property type="project" value="MGI"/>
</dbReference>
<dbReference type="GO" id="GO:1905515">
    <property type="term" value="P:non-motile cilium assembly"/>
    <property type="evidence" value="ECO:0000315"/>
    <property type="project" value="MGI"/>
</dbReference>
<dbReference type="GO" id="GO:0008104">
    <property type="term" value="P:protein localization"/>
    <property type="evidence" value="ECO:0000315"/>
    <property type="project" value="MGI"/>
</dbReference>
<dbReference type="GO" id="GO:0003356">
    <property type="term" value="P:regulation of cilium beat frequency"/>
    <property type="evidence" value="ECO:0000315"/>
    <property type="project" value="MGI"/>
</dbReference>
<dbReference type="GO" id="GO:0090175">
    <property type="term" value="P:regulation of establishment of planar polarity"/>
    <property type="evidence" value="ECO:0000315"/>
    <property type="project" value="MGI"/>
</dbReference>
<dbReference type="GO" id="GO:0007288">
    <property type="term" value="P:sperm axoneme assembly"/>
    <property type="evidence" value="ECO:0000315"/>
    <property type="project" value="MGI"/>
</dbReference>
<dbReference type="GO" id="GO:0007283">
    <property type="term" value="P:spermatogenesis"/>
    <property type="evidence" value="ECO:0000315"/>
    <property type="project" value="MGI"/>
</dbReference>
<dbReference type="GO" id="GO:0043149">
    <property type="term" value="P:stress fiber assembly"/>
    <property type="evidence" value="ECO:0000315"/>
    <property type="project" value="MGI"/>
</dbReference>
<dbReference type="GO" id="GO:0006931">
    <property type="term" value="P:substrate-dependent cell migration, cell attachment to substrate"/>
    <property type="evidence" value="ECO:0000315"/>
    <property type="project" value="MGI"/>
</dbReference>
<dbReference type="GO" id="GO:0021591">
    <property type="term" value="P:ventricular system development"/>
    <property type="evidence" value="ECO:0000315"/>
    <property type="project" value="MGI"/>
</dbReference>
<dbReference type="FunFam" id="1.25.10.10:FF:000196">
    <property type="entry name" value="Sperm associated antigen 6"/>
    <property type="match status" value="1"/>
</dbReference>
<dbReference type="FunFam" id="1.25.10.10:FF:000129">
    <property type="entry name" value="sperm-associated antigen 6 isoform X1"/>
    <property type="match status" value="1"/>
</dbReference>
<dbReference type="Gene3D" id="1.25.10.10">
    <property type="entry name" value="Leucine-rich Repeat Variant"/>
    <property type="match status" value="2"/>
</dbReference>
<dbReference type="InterPro" id="IPR011989">
    <property type="entry name" value="ARM-like"/>
</dbReference>
<dbReference type="InterPro" id="IPR016024">
    <property type="entry name" value="ARM-type_fold"/>
</dbReference>
<dbReference type="InterPro" id="IPR000225">
    <property type="entry name" value="Armadillo"/>
</dbReference>
<dbReference type="PANTHER" id="PTHR23314:SF2">
    <property type="entry name" value="SPERM-ASSOCIATED ANTIGEN 6"/>
    <property type="match status" value="1"/>
</dbReference>
<dbReference type="PANTHER" id="PTHR23314">
    <property type="entry name" value="SPERM-ASSOCIATED ANTIGEN 6 ARMADILLO REPEAT-CONTAINING"/>
    <property type="match status" value="1"/>
</dbReference>
<dbReference type="Pfam" id="PF00514">
    <property type="entry name" value="Arm"/>
    <property type="match status" value="4"/>
</dbReference>
<dbReference type="SMART" id="SM00185">
    <property type="entry name" value="ARM"/>
    <property type="match status" value="7"/>
</dbReference>
<dbReference type="SUPFAM" id="SSF48371">
    <property type="entry name" value="ARM repeat"/>
    <property type="match status" value="1"/>
</dbReference>
<gene>
    <name type="primary">Spag6</name>
    <name type="synonym">Pf16</name>
</gene>
<proteinExistence type="evidence at protein level"/>
<keyword id="KW-0966">Cell projection</keyword>
<keyword id="KW-0969">Cilium</keyword>
<keyword id="KW-0970">Cilium biogenesis/degradation</keyword>
<keyword id="KW-0963">Cytoplasm</keyword>
<keyword id="KW-0206">Cytoskeleton</keyword>
<keyword id="KW-0282">Flagellum</keyword>
<keyword id="KW-0493">Microtubule</keyword>
<keyword id="KW-1185">Reference proteome</keyword>
<keyword id="KW-0677">Repeat</keyword>
<feature type="chain" id="PRO_0000072096" description="Sperm-associated antigen 6">
    <location>
        <begin position="1"/>
        <end position="507"/>
    </location>
</feature>
<feature type="repeat" description="ARM 1">
    <location>
        <begin position="31"/>
        <end position="70"/>
    </location>
</feature>
<feature type="repeat" description="ARM 2">
    <location>
        <begin position="73"/>
        <end position="112"/>
    </location>
</feature>
<feature type="repeat" description="ARM 3">
    <location>
        <begin position="115"/>
        <end position="154"/>
    </location>
</feature>
<feature type="repeat" description="ARM 4">
    <location>
        <begin position="157"/>
        <end position="196"/>
    </location>
</feature>
<feature type="repeat" description="ARM 5">
    <location>
        <begin position="199"/>
        <end position="238"/>
    </location>
</feature>
<feature type="repeat" description="ARM 6">
    <location>
        <begin position="241"/>
        <end position="280"/>
    </location>
</feature>
<feature type="repeat" description="ARM 7">
    <location>
        <begin position="325"/>
        <end position="365"/>
    </location>
</feature>
<feature type="repeat" description="ARM 8">
    <location>
        <begin position="402"/>
        <end position="441"/>
    </location>
</feature>
<sequence length="507" mass="55269">MSQRQVLQVFEQYQKARTQFVQMVAELATRPQNIETLQNAGVMSLLRPLLLDVVPTIQQTAALALGRLANYNDDLAEAVVKGDILPQLVYSLAEQNRFYKKAAAFVLRAVGKHSPQLAQAIVDCGALDTLVICLEDFDPGVKEAAAWALGYIARHNTELSQAVVDAGAIPLLVLCIQEPEIALKRIAASALSDISKHSPELAQTVVDAGAIAHLAQMILNPDAKLKRQVLSALSQIAKHSVDLAEMVVEAEIFPVVLTCLKDKDEYVKKNACTLIREIAKHTPELSQLIVNAGGVAAVIDCIGSCKGNIRLPGIMMLGYVAAHSENLAMAVIISKGVPQLSICLSEEPEDHIKAAAAWALGQLGRHTPEHARAVAVTNTLPVLLSLYMSPESSEDLQLKSKKAIKNILQKCTYLPALEPFLYDAPPNILKHVVGQFSKVLPHDSKARRLFVTSGGLKKVQEIKAEPGSLLQEYINSINNCYPEEIVRYYSPGYSDTLLQRVDSYQPL</sequence>
<organism>
    <name type="scientific">Mus musculus</name>
    <name type="common">Mouse</name>
    <dbReference type="NCBI Taxonomy" id="10090"/>
    <lineage>
        <taxon>Eukaryota</taxon>
        <taxon>Metazoa</taxon>
        <taxon>Chordata</taxon>
        <taxon>Craniata</taxon>
        <taxon>Vertebrata</taxon>
        <taxon>Euteleostomi</taxon>
        <taxon>Mammalia</taxon>
        <taxon>Eutheria</taxon>
        <taxon>Euarchontoglires</taxon>
        <taxon>Glires</taxon>
        <taxon>Rodentia</taxon>
        <taxon>Myomorpha</taxon>
        <taxon>Muroidea</taxon>
        <taxon>Muridae</taxon>
        <taxon>Murinae</taxon>
        <taxon>Mus</taxon>
        <taxon>Mus</taxon>
    </lineage>
</organism>
<evidence type="ECO:0000269" key="1">
    <source>
    </source>
</evidence>
<evidence type="ECO:0000269" key="2">
    <source>
    </source>
</evidence>
<evidence type="ECO:0000269" key="3">
    <source>
    </source>
</evidence>
<evidence type="ECO:0000269" key="4">
    <source>
    </source>
</evidence>
<evidence type="ECO:0000269" key="5">
    <source>
    </source>
</evidence>
<name>SPAG6_MOUSE</name>
<accession>Q9JLI7</accession>
<accession>Q8K461</accession>
<protein>
    <recommendedName>
        <fullName>Sperm-associated antigen 6</fullName>
    </recommendedName>
    <alternativeName>
        <fullName>Axoneme central apparatus protein</fullName>
    </alternativeName>
    <alternativeName>
        <fullName>Protein PF16 homolog</fullName>
    </alternativeName>
</protein>
<comment type="function">
    <text evidence="1 2">Important for structural integrity of the central apparatus in the sperm tail and for flagellar motility.</text>
</comment>
<comment type="subunit">
    <text evidence="3 4">Interacts with SPAG16 and SPAG17.</text>
</comment>
<comment type="interaction">
    <interactant intactId="EBI-1783654">
        <id>Q9JLI7</id>
    </interactant>
    <interactant intactId="EBI-1783665">
        <id>Q5S003</id>
        <label>Spag17</label>
    </interactant>
    <organismsDiffer>false</organismsDiffer>
    <experiments>3</experiments>
</comment>
<comment type="subcellular location">
    <subcellularLocation>
        <location evidence="1">Cytoplasm</location>
        <location evidence="1">Cytoskeleton</location>
    </subcellularLocation>
    <subcellularLocation>
        <location evidence="1">Cell projection</location>
        <location evidence="1">Cilium</location>
        <location evidence="1">Flagellum</location>
    </subcellularLocation>
    <subcellularLocation>
        <location evidence="5">Cytoplasm</location>
        <location evidence="5">Cytoskeleton</location>
        <location evidence="5">Cilium axoneme</location>
    </subcellularLocation>
    <text evidence="1 5">Associated with microtubules. Detected on the sperm flagellum (PubMed:10684790). Localizes in the cilium axoneme in a SPEF1-dependent manner (PubMed:30535028).</text>
</comment>
<comment type="tissue specificity">
    <text evidence="1 3">Highly expressed in testis. Not detected in prostate, ovary, spleen, thymus, small intestine, colon and peripheral blood leukocytes.</text>
</comment>
<comment type="disease">
    <text evidence="2">Defects in Spag6 are a cause of hydrocephalus and of male infertility.</text>
</comment>
<comment type="disruption phenotype">
    <text evidence="4">In null embryos the central apparatus is unstable leading to a loss, and presumably degradation of proteins to which SPAG6 normally binds, including SPAG16 and SPAG17.</text>
</comment>
<reference key="1">
    <citation type="journal article" date="2000" name="Biol. Reprod.">
        <title>Sperm antigen 6 is the murine homologue of the Chlamydomonas reinhardtii central apparatus protein encoded by the PF16 locus.</title>
        <authorList>
            <person name="Sapiro R."/>
            <person name="Tarantino L.M."/>
            <person name="Velazquez F."/>
            <person name="Kiriakidou M."/>
            <person name="Hecht N.B."/>
            <person name="Bucan M."/>
            <person name="Strauss J.F. III"/>
        </authorList>
    </citation>
    <scope>NUCLEOTIDE SEQUENCE [MRNA]</scope>
    <scope>FUNCTION</scope>
    <scope>TISSUE SPECIFICITY</scope>
    <scope>SUBCELLULAR LOCATION</scope>
    <source>
        <tissue>Sperm</tissue>
    </source>
</reference>
<reference key="2">
    <citation type="journal article" date="2005" name="Science">
        <title>The transcriptional landscape of the mammalian genome.</title>
        <authorList>
            <person name="Carninci P."/>
            <person name="Kasukawa T."/>
            <person name="Katayama S."/>
            <person name="Gough J."/>
            <person name="Frith M.C."/>
            <person name="Maeda N."/>
            <person name="Oyama R."/>
            <person name="Ravasi T."/>
            <person name="Lenhard B."/>
            <person name="Wells C."/>
            <person name="Kodzius R."/>
            <person name="Shimokawa K."/>
            <person name="Bajic V.B."/>
            <person name="Brenner S.E."/>
            <person name="Batalov S."/>
            <person name="Forrest A.R."/>
            <person name="Zavolan M."/>
            <person name="Davis M.J."/>
            <person name="Wilming L.G."/>
            <person name="Aidinis V."/>
            <person name="Allen J.E."/>
            <person name="Ambesi-Impiombato A."/>
            <person name="Apweiler R."/>
            <person name="Aturaliya R.N."/>
            <person name="Bailey T.L."/>
            <person name="Bansal M."/>
            <person name="Baxter L."/>
            <person name="Beisel K.W."/>
            <person name="Bersano T."/>
            <person name="Bono H."/>
            <person name="Chalk A.M."/>
            <person name="Chiu K.P."/>
            <person name="Choudhary V."/>
            <person name="Christoffels A."/>
            <person name="Clutterbuck D.R."/>
            <person name="Crowe M.L."/>
            <person name="Dalla E."/>
            <person name="Dalrymple B.P."/>
            <person name="de Bono B."/>
            <person name="Della Gatta G."/>
            <person name="di Bernardo D."/>
            <person name="Down T."/>
            <person name="Engstrom P."/>
            <person name="Fagiolini M."/>
            <person name="Faulkner G."/>
            <person name="Fletcher C.F."/>
            <person name="Fukushima T."/>
            <person name="Furuno M."/>
            <person name="Futaki S."/>
            <person name="Gariboldi M."/>
            <person name="Georgii-Hemming P."/>
            <person name="Gingeras T.R."/>
            <person name="Gojobori T."/>
            <person name="Green R.E."/>
            <person name="Gustincich S."/>
            <person name="Harbers M."/>
            <person name="Hayashi Y."/>
            <person name="Hensch T.K."/>
            <person name="Hirokawa N."/>
            <person name="Hill D."/>
            <person name="Huminiecki L."/>
            <person name="Iacono M."/>
            <person name="Ikeo K."/>
            <person name="Iwama A."/>
            <person name="Ishikawa T."/>
            <person name="Jakt M."/>
            <person name="Kanapin A."/>
            <person name="Katoh M."/>
            <person name="Kawasawa Y."/>
            <person name="Kelso J."/>
            <person name="Kitamura H."/>
            <person name="Kitano H."/>
            <person name="Kollias G."/>
            <person name="Krishnan S.P."/>
            <person name="Kruger A."/>
            <person name="Kummerfeld S.K."/>
            <person name="Kurochkin I.V."/>
            <person name="Lareau L.F."/>
            <person name="Lazarevic D."/>
            <person name="Lipovich L."/>
            <person name="Liu J."/>
            <person name="Liuni S."/>
            <person name="McWilliam S."/>
            <person name="Madan Babu M."/>
            <person name="Madera M."/>
            <person name="Marchionni L."/>
            <person name="Matsuda H."/>
            <person name="Matsuzawa S."/>
            <person name="Miki H."/>
            <person name="Mignone F."/>
            <person name="Miyake S."/>
            <person name="Morris K."/>
            <person name="Mottagui-Tabar S."/>
            <person name="Mulder N."/>
            <person name="Nakano N."/>
            <person name="Nakauchi H."/>
            <person name="Ng P."/>
            <person name="Nilsson R."/>
            <person name="Nishiguchi S."/>
            <person name="Nishikawa S."/>
            <person name="Nori F."/>
            <person name="Ohara O."/>
            <person name="Okazaki Y."/>
            <person name="Orlando V."/>
            <person name="Pang K.C."/>
            <person name="Pavan W.J."/>
            <person name="Pavesi G."/>
            <person name="Pesole G."/>
            <person name="Petrovsky N."/>
            <person name="Piazza S."/>
            <person name="Reed J."/>
            <person name="Reid J.F."/>
            <person name="Ring B.Z."/>
            <person name="Ringwald M."/>
            <person name="Rost B."/>
            <person name="Ruan Y."/>
            <person name="Salzberg S.L."/>
            <person name="Sandelin A."/>
            <person name="Schneider C."/>
            <person name="Schoenbach C."/>
            <person name="Sekiguchi K."/>
            <person name="Semple C.A."/>
            <person name="Seno S."/>
            <person name="Sessa L."/>
            <person name="Sheng Y."/>
            <person name="Shibata Y."/>
            <person name="Shimada H."/>
            <person name="Shimada K."/>
            <person name="Silva D."/>
            <person name="Sinclair B."/>
            <person name="Sperling S."/>
            <person name="Stupka E."/>
            <person name="Sugiura K."/>
            <person name="Sultana R."/>
            <person name="Takenaka Y."/>
            <person name="Taki K."/>
            <person name="Tammoja K."/>
            <person name="Tan S.L."/>
            <person name="Tang S."/>
            <person name="Taylor M.S."/>
            <person name="Tegner J."/>
            <person name="Teichmann S.A."/>
            <person name="Ueda H.R."/>
            <person name="van Nimwegen E."/>
            <person name="Verardo R."/>
            <person name="Wei C.L."/>
            <person name="Yagi K."/>
            <person name="Yamanishi H."/>
            <person name="Zabarovsky E."/>
            <person name="Zhu S."/>
            <person name="Zimmer A."/>
            <person name="Hide W."/>
            <person name="Bult C."/>
            <person name="Grimmond S.M."/>
            <person name="Teasdale R.D."/>
            <person name="Liu E.T."/>
            <person name="Brusic V."/>
            <person name="Quackenbush J."/>
            <person name="Wahlestedt C."/>
            <person name="Mattick J.S."/>
            <person name="Hume D.A."/>
            <person name="Kai C."/>
            <person name="Sasaki D."/>
            <person name="Tomaru Y."/>
            <person name="Fukuda S."/>
            <person name="Kanamori-Katayama M."/>
            <person name="Suzuki M."/>
            <person name="Aoki J."/>
            <person name="Arakawa T."/>
            <person name="Iida J."/>
            <person name="Imamura K."/>
            <person name="Itoh M."/>
            <person name="Kato T."/>
            <person name="Kawaji H."/>
            <person name="Kawagashira N."/>
            <person name="Kawashima T."/>
            <person name="Kojima M."/>
            <person name="Kondo S."/>
            <person name="Konno H."/>
            <person name="Nakano K."/>
            <person name="Ninomiya N."/>
            <person name="Nishio T."/>
            <person name="Okada M."/>
            <person name="Plessy C."/>
            <person name="Shibata K."/>
            <person name="Shiraki T."/>
            <person name="Suzuki S."/>
            <person name="Tagami M."/>
            <person name="Waki K."/>
            <person name="Watahiki A."/>
            <person name="Okamura-Oho Y."/>
            <person name="Suzuki H."/>
            <person name="Kawai J."/>
            <person name="Hayashizaki Y."/>
        </authorList>
    </citation>
    <scope>NUCLEOTIDE SEQUENCE [LARGE SCALE MRNA]</scope>
    <source>
        <strain>C57BL/6J</strain>
        <tissue>Testis</tissue>
    </source>
</reference>
<reference key="3">
    <citation type="journal article" date="2002" name="Mol. Cell. Biol.">
        <title>Male infertility, impaired sperm motility, and hydrocephalus in mice deficient in sperm-associated antigen 6.</title>
        <authorList>
            <person name="Sapiro R."/>
            <person name="Kostetskii I."/>
            <person name="Olds-Clarke P."/>
            <person name="Gerton G.L."/>
            <person name="Radice G.L."/>
            <person name="Strauss J.F. III"/>
        </authorList>
    </citation>
    <scope>NUCLEOTIDE SEQUENCE [GENOMIC DNA] OF 42-96</scope>
    <scope>FUNCTION</scope>
    <scope>DISEASE</scope>
    <source>
        <strain>C57BL/6J</strain>
        <tissue>Testis</tissue>
    </source>
</reference>
<reference key="4">
    <citation type="journal article" date="2002" name="Mol. Cell. Biol.">
        <title>A sperm-associated WD repeat protein orthologous to Chlamydomonas PF20 associates with Spag6, the mammalian orthologue of Chlamydomonas PF16.</title>
        <authorList>
            <person name="Zhang Z."/>
            <person name="Sapiro R."/>
            <person name="Kapfhamer D."/>
            <person name="Bucan M."/>
            <person name="Bray J."/>
            <person name="Chennathukuzhi V."/>
            <person name="McNamara P."/>
            <person name="Curtis A."/>
            <person name="Zhang M."/>
            <person name="Blanchette-Mackie E.J."/>
            <person name="Strauss J.F. III"/>
        </authorList>
    </citation>
    <scope>INTERACTION WITH SPAG16</scope>
    <scope>TISSUE SPECIFICITY</scope>
    <source>
        <tissue>Sperm</tissue>
    </source>
</reference>
<reference key="5">
    <citation type="journal article" date="2005" name="Mol. Cell. Proteomics">
        <title>Dissecting the axoneme interactome: the mammalian orthologue of Chlamydomonas PF6 interacts with sperm-associated antigen 6, the mammalian orthologue of Chlamydomonas PF16.</title>
        <authorList>
            <person name="Zhang Z."/>
            <person name="Jones B.H."/>
            <person name="Tang W."/>
            <person name="Moss S.B."/>
            <person name="Wei Z."/>
            <person name="Ho C."/>
            <person name="Pollack M."/>
            <person name="Horowitz E."/>
            <person name="Bennett J."/>
            <person name="Baker M.E."/>
            <person name="Strauss J.F. III"/>
        </authorList>
    </citation>
    <scope>INTERACTION WITH SPAG17</scope>
    <scope>DISRUPTION PHENOTYPE</scope>
    <source>
        <strain>C57BL/6J</strain>
    </source>
</reference>
<reference key="6">
    <citation type="journal article" date="2010" name="Cell">
        <title>A tissue-specific atlas of mouse protein phosphorylation and expression.</title>
        <authorList>
            <person name="Huttlin E.L."/>
            <person name="Jedrychowski M.P."/>
            <person name="Elias J.E."/>
            <person name="Goswami T."/>
            <person name="Rad R."/>
            <person name="Beausoleil S.A."/>
            <person name="Villen J."/>
            <person name="Haas W."/>
            <person name="Sowa M.E."/>
            <person name="Gygi S.P."/>
        </authorList>
    </citation>
    <scope>IDENTIFICATION BY MASS SPECTROMETRY [LARGE SCALE ANALYSIS]</scope>
    <source>
        <tissue>Testis</tissue>
    </source>
</reference>
<reference key="7">
    <citation type="journal article" date="2019" name="J. Mol. Cell Biol.">
        <title>Microtubule-bundling protein Spef1 enables mammalian ciliary central apparatus formation.</title>
        <authorList>
            <person name="Zheng J."/>
            <person name="Liu H."/>
            <person name="Zhu L."/>
            <person name="Chen Y."/>
            <person name="Zhao H."/>
            <person name="Zhang W."/>
            <person name="Li F."/>
            <person name="Xie L."/>
            <person name="Yan X."/>
            <person name="Zhu X."/>
        </authorList>
    </citation>
    <scope>SUBCELLULAR LOCATION</scope>
</reference>